<name>TRMD_BURO0</name>
<comment type="function">
    <text evidence="1">Specifically methylates guanosine-37 in various tRNAs.</text>
</comment>
<comment type="catalytic activity">
    <reaction evidence="1">
        <text>guanosine(37) in tRNA + S-adenosyl-L-methionine = N(1)-methylguanosine(37) in tRNA + S-adenosyl-L-homocysteine + H(+)</text>
        <dbReference type="Rhea" id="RHEA:36899"/>
        <dbReference type="Rhea" id="RHEA-COMP:10145"/>
        <dbReference type="Rhea" id="RHEA-COMP:10147"/>
        <dbReference type="ChEBI" id="CHEBI:15378"/>
        <dbReference type="ChEBI" id="CHEBI:57856"/>
        <dbReference type="ChEBI" id="CHEBI:59789"/>
        <dbReference type="ChEBI" id="CHEBI:73542"/>
        <dbReference type="ChEBI" id="CHEBI:74269"/>
        <dbReference type="EC" id="2.1.1.228"/>
    </reaction>
</comment>
<comment type="subunit">
    <text evidence="1">Homodimer.</text>
</comment>
<comment type="subcellular location">
    <subcellularLocation>
        <location evidence="1">Cytoplasm</location>
    </subcellularLocation>
</comment>
<comment type="similarity">
    <text evidence="1">Belongs to the RNA methyltransferase TrmD family.</text>
</comment>
<organism>
    <name type="scientific">Burkholderia orbicola (strain MC0-3)</name>
    <dbReference type="NCBI Taxonomy" id="406425"/>
    <lineage>
        <taxon>Bacteria</taxon>
        <taxon>Pseudomonadati</taxon>
        <taxon>Pseudomonadota</taxon>
        <taxon>Betaproteobacteria</taxon>
        <taxon>Burkholderiales</taxon>
        <taxon>Burkholderiaceae</taxon>
        <taxon>Burkholderia</taxon>
        <taxon>Burkholderia cepacia complex</taxon>
        <taxon>Burkholderia orbicola</taxon>
    </lineage>
</organism>
<gene>
    <name evidence="1" type="primary">trmD</name>
    <name type="ordered locus">Bcenmc03_1030</name>
</gene>
<proteinExistence type="inferred from homology"/>
<feature type="chain" id="PRO_1000130142" description="tRNA (guanine-N(1)-)-methyltransferase">
    <location>
        <begin position="1"/>
        <end position="264"/>
    </location>
</feature>
<feature type="binding site" evidence="1">
    <location>
        <position position="125"/>
    </location>
    <ligand>
        <name>S-adenosyl-L-methionine</name>
        <dbReference type="ChEBI" id="CHEBI:59789"/>
    </ligand>
</feature>
<feature type="binding site" evidence="1">
    <location>
        <begin position="145"/>
        <end position="150"/>
    </location>
    <ligand>
        <name>S-adenosyl-L-methionine</name>
        <dbReference type="ChEBI" id="CHEBI:59789"/>
    </ligand>
</feature>
<evidence type="ECO:0000255" key="1">
    <source>
        <dbReference type="HAMAP-Rule" id="MF_00605"/>
    </source>
</evidence>
<reference key="1">
    <citation type="submission" date="2008-02" db="EMBL/GenBank/DDBJ databases">
        <title>Complete sequence of chromosome 1 of Burkholderia cenocepacia MC0-3.</title>
        <authorList>
            <person name="Copeland A."/>
            <person name="Lucas S."/>
            <person name="Lapidus A."/>
            <person name="Barry K."/>
            <person name="Bruce D."/>
            <person name="Goodwin L."/>
            <person name="Glavina del Rio T."/>
            <person name="Dalin E."/>
            <person name="Tice H."/>
            <person name="Pitluck S."/>
            <person name="Chain P."/>
            <person name="Malfatti S."/>
            <person name="Shin M."/>
            <person name="Vergez L."/>
            <person name="Schmutz J."/>
            <person name="Larimer F."/>
            <person name="Land M."/>
            <person name="Hauser L."/>
            <person name="Kyrpides N."/>
            <person name="Mikhailova N."/>
            <person name="Tiedje J."/>
            <person name="Richardson P."/>
        </authorList>
    </citation>
    <scope>NUCLEOTIDE SEQUENCE [LARGE SCALE GENOMIC DNA]</scope>
    <source>
        <strain>MC0-3</strain>
    </source>
</reference>
<sequence length="264" mass="29332">MNQVTESAVQFDVVTLFPEMFRALTDWGITSRAVKQGRFGLRTWNPRDFTTDNYRTVDDRPYGGGPGMVMLARPLEAAIDAAKAAQAEQGIASTRVVMMSPQGAPLTHDRAVRMAQEPGVVVLCGRYEAIDQRLLDRCVDEEISLGDFVLSGGELPAMAMMDAVVRLLPGVLNDSLSAVQDSFADGLLDCPHYTRPEEYDGVRVPDVLLGGHHAEIEKWRRQEALRNTLRKRPDLIVRARREKLLSRADEAWLANLAREAKDAS</sequence>
<dbReference type="EC" id="2.1.1.228" evidence="1"/>
<dbReference type="EMBL" id="CP000958">
    <property type="protein sequence ID" value="ACA90207.1"/>
    <property type="molecule type" value="Genomic_DNA"/>
</dbReference>
<dbReference type="RefSeq" id="WP_006476548.1">
    <property type="nucleotide sequence ID" value="NC_010508.1"/>
</dbReference>
<dbReference type="SMR" id="B1JXU5"/>
<dbReference type="GeneID" id="93192684"/>
<dbReference type="KEGG" id="bcm:Bcenmc03_1030"/>
<dbReference type="HOGENOM" id="CLU_047363_0_2_4"/>
<dbReference type="Proteomes" id="UP000002169">
    <property type="component" value="Chromosome 1"/>
</dbReference>
<dbReference type="GO" id="GO:0005829">
    <property type="term" value="C:cytosol"/>
    <property type="evidence" value="ECO:0007669"/>
    <property type="project" value="TreeGrafter"/>
</dbReference>
<dbReference type="GO" id="GO:0052906">
    <property type="term" value="F:tRNA (guanine(37)-N1)-methyltransferase activity"/>
    <property type="evidence" value="ECO:0007669"/>
    <property type="project" value="UniProtKB-UniRule"/>
</dbReference>
<dbReference type="GO" id="GO:0002939">
    <property type="term" value="P:tRNA N1-guanine methylation"/>
    <property type="evidence" value="ECO:0007669"/>
    <property type="project" value="TreeGrafter"/>
</dbReference>
<dbReference type="CDD" id="cd18080">
    <property type="entry name" value="TrmD-like"/>
    <property type="match status" value="1"/>
</dbReference>
<dbReference type="FunFam" id="1.10.1270.20:FF:000001">
    <property type="entry name" value="tRNA (guanine-N(1)-)-methyltransferase"/>
    <property type="match status" value="1"/>
</dbReference>
<dbReference type="FunFam" id="3.40.1280.10:FF:000001">
    <property type="entry name" value="tRNA (guanine-N(1)-)-methyltransferase"/>
    <property type="match status" value="1"/>
</dbReference>
<dbReference type="Gene3D" id="3.40.1280.10">
    <property type="match status" value="1"/>
</dbReference>
<dbReference type="Gene3D" id="1.10.1270.20">
    <property type="entry name" value="tRNA(m1g37)methyltransferase, domain 2"/>
    <property type="match status" value="1"/>
</dbReference>
<dbReference type="HAMAP" id="MF_00605">
    <property type="entry name" value="TrmD"/>
    <property type="match status" value="1"/>
</dbReference>
<dbReference type="InterPro" id="IPR029028">
    <property type="entry name" value="Alpha/beta_knot_MTases"/>
</dbReference>
<dbReference type="InterPro" id="IPR023148">
    <property type="entry name" value="tRNA_m1G_MeTrfase_C_sf"/>
</dbReference>
<dbReference type="InterPro" id="IPR002649">
    <property type="entry name" value="tRNA_m1G_MeTrfase_TrmD"/>
</dbReference>
<dbReference type="InterPro" id="IPR029026">
    <property type="entry name" value="tRNA_m1G_MTases_N"/>
</dbReference>
<dbReference type="InterPro" id="IPR016009">
    <property type="entry name" value="tRNA_MeTrfase_TRMD/TRM10"/>
</dbReference>
<dbReference type="NCBIfam" id="NF000648">
    <property type="entry name" value="PRK00026.1"/>
    <property type="match status" value="1"/>
</dbReference>
<dbReference type="NCBIfam" id="TIGR00088">
    <property type="entry name" value="trmD"/>
    <property type="match status" value="1"/>
</dbReference>
<dbReference type="PANTHER" id="PTHR46417">
    <property type="entry name" value="TRNA (GUANINE-N(1)-)-METHYLTRANSFERASE"/>
    <property type="match status" value="1"/>
</dbReference>
<dbReference type="PANTHER" id="PTHR46417:SF1">
    <property type="entry name" value="TRNA (GUANINE-N(1)-)-METHYLTRANSFERASE"/>
    <property type="match status" value="1"/>
</dbReference>
<dbReference type="Pfam" id="PF01746">
    <property type="entry name" value="tRNA_m1G_MT"/>
    <property type="match status" value="1"/>
</dbReference>
<dbReference type="PIRSF" id="PIRSF000386">
    <property type="entry name" value="tRNA_mtase"/>
    <property type="match status" value="1"/>
</dbReference>
<dbReference type="SUPFAM" id="SSF75217">
    <property type="entry name" value="alpha/beta knot"/>
    <property type="match status" value="1"/>
</dbReference>
<keyword id="KW-0963">Cytoplasm</keyword>
<keyword id="KW-0489">Methyltransferase</keyword>
<keyword id="KW-0949">S-adenosyl-L-methionine</keyword>
<keyword id="KW-0808">Transferase</keyword>
<keyword id="KW-0819">tRNA processing</keyword>
<accession>B1JXU5</accession>
<protein>
    <recommendedName>
        <fullName evidence="1">tRNA (guanine-N(1)-)-methyltransferase</fullName>
        <ecNumber evidence="1">2.1.1.228</ecNumber>
    </recommendedName>
    <alternativeName>
        <fullName evidence="1">M1G-methyltransferase</fullName>
    </alternativeName>
    <alternativeName>
        <fullName evidence="1">tRNA [GM37] methyltransferase</fullName>
    </alternativeName>
</protein>